<protein>
    <recommendedName>
        <fullName>Arginine deiminase</fullName>
        <shortName>ADI</shortName>
        <ecNumber>3.5.3.6</ecNumber>
    </recommendedName>
    <alternativeName>
        <fullName>Arginine dihydrolase</fullName>
        <shortName>AD</shortName>
    </alternativeName>
</protein>
<organism>
    <name type="scientific">Mycobacterium tuberculosis (strain ATCC 25618 / H37Rv)</name>
    <dbReference type="NCBI Taxonomy" id="83332"/>
    <lineage>
        <taxon>Bacteria</taxon>
        <taxon>Bacillati</taxon>
        <taxon>Actinomycetota</taxon>
        <taxon>Actinomycetes</taxon>
        <taxon>Mycobacteriales</taxon>
        <taxon>Mycobacteriaceae</taxon>
        <taxon>Mycobacterium</taxon>
        <taxon>Mycobacterium tuberculosis complex</taxon>
    </lineage>
</organism>
<evidence type="ECO:0000250" key="1"/>
<evidence type="ECO:0000305" key="2"/>
<keyword id="KW-0056">Arginine metabolism</keyword>
<keyword id="KW-0963">Cytoplasm</keyword>
<keyword id="KW-0378">Hydrolase</keyword>
<keyword id="KW-1185">Reference proteome</keyword>
<comment type="catalytic activity">
    <reaction>
        <text>L-arginine + H2O = L-citrulline + NH4(+)</text>
        <dbReference type="Rhea" id="RHEA:19597"/>
        <dbReference type="ChEBI" id="CHEBI:15377"/>
        <dbReference type="ChEBI" id="CHEBI:28938"/>
        <dbReference type="ChEBI" id="CHEBI:32682"/>
        <dbReference type="ChEBI" id="CHEBI:57743"/>
        <dbReference type="EC" id="3.5.3.6"/>
    </reaction>
</comment>
<comment type="pathway">
    <text>Amino-acid degradation; L-arginine degradation via ADI pathway; carbamoyl phosphate from L-arginine: step 1/2.</text>
</comment>
<comment type="subcellular location">
    <subcellularLocation>
        <location evidence="2">Cytoplasm</location>
    </subcellularLocation>
</comment>
<comment type="miscellaneous">
    <text>Was identified as a high-confidence drug target.</text>
</comment>
<comment type="similarity">
    <text evidence="2">Belongs to the arginine deiminase family.</text>
</comment>
<sequence>MGVELGSNSEVGALRVVILHRPGAELRRLTPRNTDQLLFDGLPWVSRAQDEHDEFAELLASRGAEVLLLSDLLTEALHHSGAARMQGIAAAVDAPRLGLPLAQELSAYLRSLDPGRLAHVLTAGMTFNELPSDTRTDVSLVLRMHHGGDFVIEPLPNLVFTRDSSIWIGPRVVIPSLALRARVREASLTDLIYAHHPRFTGVRRAYESRTAPVEGGDVLLLAPGVVAVGVGERTTPAGAEALARSLFDDDLAHTVLAVPIAQQRAQMHLDTVCTMVDTDTMVMYANVVDTLEAFTIQRTPDGVTIGDAAPFAEAAAKAMGIDKLRVIHTGMDPVVAEREQWDDGNNTLALAPGVVVAYERNVQTNARLQDAGIEVLTIAGSELGTGRGGPRCMSCPAARDPL</sequence>
<reference key="1">
    <citation type="journal article" date="1998" name="Nature">
        <title>Deciphering the biology of Mycobacterium tuberculosis from the complete genome sequence.</title>
        <authorList>
            <person name="Cole S.T."/>
            <person name="Brosch R."/>
            <person name="Parkhill J."/>
            <person name="Garnier T."/>
            <person name="Churcher C.M."/>
            <person name="Harris D.E."/>
            <person name="Gordon S.V."/>
            <person name="Eiglmeier K."/>
            <person name="Gas S."/>
            <person name="Barry C.E. III"/>
            <person name="Tekaia F."/>
            <person name="Badcock K."/>
            <person name="Basham D."/>
            <person name="Brown D."/>
            <person name="Chillingworth T."/>
            <person name="Connor R."/>
            <person name="Davies R.M."/>
            <person name="Devlin K."/>
            <person name="Feltwell T."/>
            <person name="Gentles S."/>
            <person name="Hamlin N."/>
            <person name="Holroyd S."/>
            <person name="Hornsby T."/>
            <person name="Jagels K."/>
            <person name="Krogh A."/>
            <person name="McLean J."/>
            <person name="Moule S."/>
            <person name="Murphy L.D."/>
            <person name="Oliver S."/>
            <person name="Osborne J."/>
            <person name="Quail M.A."/>
            <person name="Rajandream M.A."/>
            <person name="Rogers J."/>
            <person name="Rutter S."/>
            <person name="Seeger K."/>
            <person name="Skelton S."/>
            <person name="Squares S."/>
            <person name="Squares R."/>
            <person name="Sulston J.E."/>
            <person name="Taylor K."/>
            <person name="Whitehead S."/>
            <person name="Barrell B.G."/>
        </authorList>
    </citation>
    <scope>NUCLEOTIDE SEQUENCE [LARGE SCALE GENOMIC DNA]</scope>
    <source>
        <strain>ATCC 25618 / H37Rv</strain>
    </source>
</reference>
<reference key="2">
    <citation type="journal article" date="2008" name="BMC Syst. Biol.">
        <title>targetTB: a target identification pipeline for Mycobacterium tuberculosis through an interactome, reactome and genome-scale structural analysis.</title>
        <authorList>
            <person name="Raman K."/>
            <person name="Yeturu K."/>
            <person name="Chandra N."/>
        </authorList>
    </citation>
    <scope>IDENTIFICATION AS A DRUG TARGET [LARGE SCALE ANALYSIS]</scope>
</reference>
<reference key="3">
    <citation type="journal article" date="2011" name="Mol. Cell. Proteomics">
        <title>Proteogenomic analysis of Mycobacterium tuberculosis by high resolution mass spectrometry.</title>
        <authorList>
            <person name="Kelkar D.S."/>
            <person name="Kumar D."/>
            <person name="Kumar P."/>
            <person name="Balakrishnan L."/>
            <person name="Muthusamy B."/>
            <person name="Yadav A.K."/>
            <person name="Shrivastava P."/>
            <person name="Marimuthu A."/>
            <person name="Anand S."/>
            <person name="Sundaram H."/>
            <person name="Kingsbury R."/>
            <person name="Harsha H.C."/>
            <person name="Nair B."/>
            <person name="Prasad T.S."/>
            <person name="Chauhan D.S."/>
            <person name="Katoch K."/>
            <person name="Katoch V.M."/>
            <person name="Kumar P."/>
            <person name="Chaerkady R."/>
            <person name="Ramachandran S."/>
            <person name="Dash D."/>
            <person name="Pandey A."/>
        </authorList>
    </citation>
    <scope>IDENTIFICATION BY MASS SPECTROMETRY [LARGE SCALE ANALYSIS]</scope>
    <source>
        <strain>ATCC 25618 / H37Rv</strain>
    </source>
</reference>
<gene>
    <name type="primary">arcA</name>
    <name type="ordered locus">Rv1001</name>
    <name type="ORF">MTCI237.16</name>
</gene>
<feature type="chain" id="PRO_0000182223" description="Arginine deiminase">
    <location>
        <begin position="1"/>
        <end position="402"/>
    </location>
</feature>
<feature type="active site" description="Amidino-cysteine intermediate" evidence="1">
    <location>
        <position position="392"/>
    </location>
</feature>
<name>ARCA_MYCTU</name>
<dbReference type="EC" id="3.5.3.6"/>
<dbReference type="EMBL" id="AL123456">
    <property type="protein sequence ID" value="CCP43751.1"/>
    <property type="molecule type" value="Genomic_DNA"/>
</dbReference>
<dbReference type="PIR" id="D70602">
    <property type="entry name" value="D70602"/>
</dbReference>
<dbReference type="RefSeq" id="NP_215517.1">
    <property type="nucleotide sequence ID" value="NC_000962.3"/>
</dbReference>
<dbReference type="RefSeq" id="WP_003405169.1">
    <property type="nucleotide sequence ID" value="NZ_NVQJ01000018.1"/>
</dbReference>
<dbReference type="SMR" id="P9WQ05"/>
<dbReference type="FunCoup" id="P9WQ05">
    <property type="interactions" value="19"/>
</dbReference>
<dbReference type="STRING" id="83332.Rv1001"/>
<dbReference type="PaxDb" id="83332-Rv1001"/>
<dbReference type="GeneID" id="45424973"/>
<dbReference type="GeneID" id="888313"/>
<dbReference type="KEGG" id="mtu:Rv1001"/>
<dbReference type="KEGG" id="mtv:RVBD_1001"/>
<dbReference type="TubercuList" id="Rv1001"/>
<dbReference type="eggNOG" id="COG2235">
    <property type="taxonomic scope" value="Bacteria"/>
</dbReference>
<dbReference type="InParanoid" id="P9WQ05"/>
<dbReference type="OrthoDB" id="9807502at2"/>
<dbReference type="PhylomeDB" id="P9WQ05"/>
<dbReference type="UniPathway" id="UPA00254">
    <property type="reaction ID" value="UER00364"/>
</dbReference>
<dbReference type="Proteomes" id="UP000001584">
    <property type="component" value="Chromosome"/>
</dbReference>
<dbReference type="GO" id="GO:0005737">
    <property type="term" value="C:cytoplasm"/>
    <property type="evidence" value="ECO:0007669"/>
    <property type="project" value="UniProtKB-SubCell"/>
</dbReference>
<dbReference type="GO" id="GO:0005886">
    <property type="term" value="C:plasma membrane"/>
    <property type="evidence" value="ECO:0007005"/>
    <property type="project" value="MTBBASE"/>
</dbReference>
<dbReference type="GO" id="GO:0016990">
    <property type="term" value="F:arginine deiminase activity"/>
    <property type="evidence" value="ECO:0000318"/>
    <property type="project" value="GO_Central"/>
</dbReference>
<dbReference type="GO" id="GO:0019547">
    <property type="term" value="P:arginine catabolic process to ornithine"/>
    <property type="evidence" value="ECO:0007669"/>
    <property type="project" value="UniProtKB-UniRule"/>
</dbReference>
<dbReference type="GO" id="GO:0019546">
    <property type="term" value="P:arginine deiminase pathway"/>
    <property type="evidence" value="ECO:0000318"/>
    <property type="project" value="GO_Central"/>
</dbReference>
<dbReference type="FunFam" id="1.10.3930.10:FF:000004">
    <property type="entry name" value="Arginine deiminase"/>
    <property type="match status" value="1"/>
</dbReference>
<dbReference type="Gene3D" id="1.10.3930.10">
    <property type="entry name" value="Arginine deiminase"/>
    <property type="match status" value="1"/>
</dbReference>
<dbReference type="Gene3D" id="3.75.10.10">
    <property type="entry name" value="L-arginine/glycine Amidinotransferase, Chain A"/>
    <property type="match status" value="1"/>
</dbReference>
<dbReference type="HAMAP" id="MF_00242">
    <property type="entry name" value="Arg_deiminase"/>
    <property type="match status" value="1"/>
</dbReference>
<dbReference type="InterPro" id="IPR003876">
    <property type="entry name" value="Arg_deiminase"/>
</dbReference>
<dbReference type="NCBIfam" id="TIGR01078">
    <property type="entry name" value="arcA"/>
    <property type="match status" value="1"/>
</dbReference>
<dbReference type="NCBIfam" id="NF002381">
    <property type="entry name" value="PRK01388.1"/>
    <property type="match status" value="1"/>
</dbReference>
<dbReference type="PANTHER" id="PTHR47271">
    <property type="entry name" value="ARGININE DEIMINASE"/>
    <property type="match status" value="1"/>
</dbReference>
<dbReference type="PANTHER" id="PTHR47271:SF2">
    <property type="entry name" value="ARGININE DEIMINASE"/>
    <property type="match status" value="1"/>
</dbReference>
<dbReference type="Pfam" id="PF02274">
    <property type="entry name" value="ADI"/>
    <property type="match status" value="1"/>
</dbReference>
<dbReference type="PIRSF" id="PIRSF006356">
    <property type="entry name" value="Arg_deiminase"/>
    <property type="match status" value="1"/>
</dbReference>
<dbReference type="PRINTS" id="PR01466">
    <property type="entry name" value="ARGDEIMINASE"/>
</dbReference>
<dbReference type="SUPFAM" id="SSF55909">
    <property type="entry name" value="Pentein"/>
    <property type="match status" value="1"/>
</dbReference>
<accession>P9WQ05</accession>
<accession>L0T5J1</accession>
<accession>O05585</accession>
<accession>P63551</accession>
<proteinExistence type="evidence at protein level"/>